<organism>
    <name type="scientific">Neisseria gonorrhoeae (strain ATCC 700825 / FA 1090)</name>
    <dbReference type="NCBI Taxonomy" id="242231"/>
    <lineage>
        <taxon>Bacteria</taxon>
        <taxon>Pseudomonadati</taxon>
        <taxon>Pseudomonadota</taxon>
        <taxon>Betaproteobacteria</taxon>
        <taxon>Neisseriales</taxon>
        <taxon>Neisseriaceae</taxon>
        <taxon>Neisseria</taxon>
    </lineage>
</organism>
<feature type="chain" id="PRO_0000184291" description="Ribosomal RNA small subunit methyltransferase G">
    <location>
        <begin position="1"/>
        <end position="207"/>
    </location>
</feature>
<feature type="binding site" evidence="1">
    <location>
        <position position="76"/>
    </location>
    <ligand>
        <name>S-adenosyl-L-methionine</name>
        <dbReference type="ChEBI" id="CHEBI:59789"/>
    </ligand>
</feature>
<feature type="binding site" evidence="1">
    <location>
        <position position="81"/>
    </location>
    <ligand>
        <name>S-adenosyl-L-methionine</name>
        <dbReference type="ChEBI" id="CHEBI:59789"/>
    </ligand>
</feature>
<feature type="binding site" evidence="1">
    <location>
        <begin position="127"/>
        <end position="128"/>
    </location>
    <ligand>
        <name>S-adenosyl-L-methionine</name>
        <dbReference type="ChEBI" id="CHEBI:59789"/>
    </ligand>
</feature>
<feature type="binding site" evidence="1">
    <location>
        <position position="141"/>
    </location>
    <ligand>
        <name>S-adenosyl-L-methionine</name>
        <dbReference type="ChEBI" id="CHEBI:59789"/>
    </ligand>
</feature>
<name>RSMG_NEIG1</name>
<dbReference type="EC" id="2.1.1.170" evidence="1"/>
<dbReference type="EMBL" id="AE004969">
    <property type="protein sequence ID" value="AAW90410.1"/>
    <property type="molecule type" value="Genomic_DNA"/>
</dbReference>
<dbReference type="RefSeq" id="WP_003690016.1">
    <property type="nucleotide sequence ID" value="NC_002946.2"/>
</dbReference>
<dbReference type="RefSeq" id="YP_208822.1">
    <property type="nucleotide sequence ID" value="NC_002946.2"/>
</dbReference>
<dbReference type="SMR" id="Q5F5X7"/>
<dbReference type="STRING" id="242231.NGO_1791"/>
<dbReference type="GeneID" id="66754350"/>
<dbReference type="KEGG" id="ngo:NGO_1791"/>
<dbReference type="PATRIC" id="fig|242231.10.peg.2150"/>
<dbReference type="HOGENOM" id="CLU_065341_2_0_4"/>
<dbReference type="Proteomes" id="UP000000535">
    <property type="component" value="Chromosome"/>
</dbReference>
<dbReference type="GO" id="GO:0005829">
    <property type="term" value="C:cytosol"/>
    <property type="evidence" value="ECO:0007669"/>
    <property type="project" value="TreeGrafter"/>
</dbReference>
<dbReference type="GO" id="GO:0070043">
    <property type="term" value="F:rRNA (guanine-N7-)-methyltransferase activity"/>
    <property type="evidence" value="ECO:0007669"/>
    <property type="project" value="UniProtKB-UniRule"/>
</dbReference>
<dbReference type="CDD" id="cd02440">
    <property type="entry name" value="AdoMet_MTases"/>
    <property type="match status" value="1"/>
</dbReference>
<dbReference type="FunFam" id="3.40.50.150:FF:000353">
    <property type="entry name" value="Ribosomal RNA small subunit methyltransferase G"/>
    <property type="match status" value="1"/>
</dbReference>
<dbReference type="Gene3D" id="3.40.50.150">
    <property type="entry name" value="Vaccinia Virus protein VP39"/>
    <property type="match status" value="1"/>
</dbReference>
<dbReference type="HAMAP" id="MF_00074">
    <property type="entry name" value="16SrRNA_methyltr_G"/>
    <property type="match status" value="1"/>
</dbReference>
<dbReference type="InterPro" id="IPR003682">
    <property type="entry name" value="rRNA_ssu_MeTfrase_G"/>
</dbReference>
<dbReference type="InterPro" id="IPR029063">
    <property type="entry name" value="SAM-dependent_MTases_sf"/>
</dbReference>
<dbReference type="NCBIfam" id="TIGR00138">
    <property type="entry name" value="rsmG_gidB"/>
    <property type="match status" value="1"/>
</dbReference>
<dbReference type="PANTHER" id="PTHR31760">
    <property type="entry name" value="S-ADENOSYL-L-METHIONINE-DEPENDENT METHYLTRANSFERASES SUPERFAMILY PROTEIN"/>
    <property type="match status" value="1"/>
</dbReference>
<dbReference type="PANTHER" id="PTHR31760:SF0">
    <property type="entry name" value="S-ADENOSYL-L-METHIONINE-DEPENDENT METHYLTRANSFERASES SUPERFAMILY PROTEIN"/>
    <property type="match status" value="1"/>
</dbReference>
<dbReference type="Pfam" id="PF02527">
    <property type="entry name" value="GidB"/>
    <property type="match status" value="1"/>
</dbReference>
<dbReference type="PIRSF" id="PIRSF003078">
    <property type="entry name" value="GidB"/>
    <property type="match status" value="1"/>
</dbReference>
<dbReference type="SUPFAM" id="SSF53335">
    <property type="entry name" value="S-adenosyl-L-methionine-dependent methyltransferases"/>
    <property type="match status" value="1"/>
</dbReference>
<evidence type="ECO:0000255" key="1">
    <source>
        <dbReference type="HAMAP-Rule" id="MF_00074"/>
    </source>
</evidence>
<keyword id="KW-0963">Cytoplasm</keyword>
<keyword id="KW-0489">Methyltransferase</keyword>
<keyword id="KW-1185">Reference proteome</keyword>
<keyword id="KW-0698">rRNA processing</keyword>
<keyword id="KW-0949">S-adenosyl-L-methionine</keyword>
<keyword id="KW-0808">Transferase</keyword>
<accession>Q5F5X7</accession>
<comment type="function">
    <text evidence="1">Specifically methylates the N7 position of guanine in position 527 of 16S rRNA.</text>
</comment>
<comment type="catalytic activity">
    <reaction evidence="1">
        <text>guanosine(527) in 16S rRNA + S-adenosyl-L-methionine = N(7)-methylguanosine(527) in 16S rRNA + S-adenosyl-L-homocysteine</text>
        <dbReference type="Rhea" id="RHEA:42732"/>
        <dbReference type="Rhea" id="RHEA-COMP:10209"/>
        <dbReference type="Rhea" id="RHEA-COMP:10210"/>
        <dbReference type="ChEBI" id="CHEBI:57856"/>
        <dbReference type="ChEBI" id="CHEBI:59789"/>
        <dbReference type="ChEBI" id="CHEBI:74269"/>
        <dbReference type="ChEBI" id="CHEBI:74480"/>
        <dbReference type="EC" id="2.1.1.170"/>
    </reaction>
</comment>
<comment type="subcellular location">
    <subcellularLocation>
        <location evidence="1">Cytoplasm</location>
    </subcellularLocation>
</comment>
<comment type="similarity">
    <text evidence="1">Belongs to the methyltransferase superfamily. RNA methyltransferase RsmG family.</text>
</comment>
<sequence>MERKERLRAGIAAMGPDISETAQDRLLAYVDLLKKWNKTYNLTALRDEEKMIVHHLLDSLTLLPYIEGAQTMLDVGSGGGQPGIPAAVCRPDVQITLLDANTKKTAFLRQAAIELGLDNVRVVSGRVEAVSDVRADVVTSRAFAELADFVSWTAHLLKDGGYWAAMKGVYPQGEIGRLPQDVCVEKVQRLDVPGLDAERHIVILSKR</sequence>
<protein>
    <recommendedName>
        <fullName evidence="1">Ribosomal RNA small subunit methyltransferase G</fullName>
        <ecNumber evidence="1">2.1.1.170</ecNumber>
    </recommendedName>
    <alternativeName>
        <fullName evidence="1">16S rRNA 7-methylguanosine methyltransferase</fullName>
        <shortName evidence="1">16S rRNA m7G methyltransferase</shortName>
    </alternativeName>
</protein>
<gene>
    <name evidence="1" type="primary">rsmG</name>
    <name type="ordered locus">NGO_1791</name>
</gene>
<proteinExistence type="inferred from homology"/>
<reference key="1">
    <citation type="submission" date="2003-03" db="EMBL/GenBank/DDBJ databases">
        <title>The complete genome sequence of Neisseria gonorrhoeae.</title>
        <authorList>
            <person name="Lewis L.A."/>
            <person name="Gillaspy A.F."/>
            <person name="McLaughlin R.E."/>
            <person name="Gipson M."/>
            <person name="Ducey T.F."/>
            <person name="Ownbey T."/>
            <person name="Hartman K."/>
            <person name="Nydick C."/>
            <person name="Carson M.B."/>
            <person name="Vaughn J."/>
            <person name="Thomson C."/>
            <person name="Song L."/>
            <person name="Lin S."/>
            <person name="Yuan X."/>
            <person name="Najar F."/>
            <person name="Zhan M."/>
            <person name="Ren Q."/>
            <person name="Zhu H."/>
            <person name="Qi S."/>
            <person name="Kenton S.M."/>
            <person name="Lai H."/>
            <person name="White J.D."/>
            <person name="Clifton S."/>
            <person name="Roe B.A."/>
            <person name="Dyer D.W."/>
        </authorList>
    </citation>
    <scope>NUCLEOTIDE SEQUENCE [LARGE SCALE GENOMIC DNA]</scope>
    <source>
        <strain>ATCC 700825 / FA 1090</strain>
    </source>
</reference>